<protein>
    <recommendedName>
        <fullName>Elongation factor P</fullName>
        <shortName>EF-P</shortName>
    </recommendedName>
</protein>
<sequence length="188" mass="21448">MKISANSIRTGNILVYNNDLWVVSKTPEHTQPGKGGAYVQVEMKNLKTGTKRNERFSSANYLEKAELEQKDYQFLYFEGDDLVLMDTKHFDQINISKEMLEEKLSFLTENMIVKVEFYNDKPLNIELPPTVILEISETDPVIKGATATASYKSAILENGIKVKVPQYLEIGEKIVVKTDDMTYVERAK</sequence>
<name>EFP_RICCN</name>
<reference key="1">
    <citation type="journal article" date="2001" name="Science">
        <title>Mechanisms of evolution in Rickettsia conorii and R. prowazekii.</title>
        <authorList>
            <person name="Ogata H."/>
            <person name="Audic S."/>
            <person name="Renesto-Audiffren P."/>
            <person name="Fournier P.-E."/>
            <person name="Barbe V."/>
            <person name="Samson D."/>
            <person name="Roux V."/>
            <person name="Cossart P."/>
            <person name="Weissenbach J."/>
            <person name="Claverie J.-M."/>
            <person name="Raoult D."/>
        </authorList>
    </citation>
    <scope>NUCLEOTIDE SEQUENCE [LARGE SCALE GENOMIC DNA]</scope>
    <source>
        <strain>ATCC VR-613 / Malish 7</strain>
    </source>
</reference>
<gene>
    <name type="primary">efp</name>
    <name type="ordered locus">RC0322</name>
</gene>
<feature type="chain" id="PRO_0000094319" description="Elongation factor P">
    <location>
        <begin position="1"/>
        <end position="188"/>
    </location>
</feature>
<accession>Q92IU8</accession>
<proteinExistence type="inferred from homology"/>
<evidence type="ECO:0000250" key="1"/>
<evidence type="ECO:0000305" key="2"/>
<organism>
    <name type="scientific">Rickettsia conorii (strain ATCC VR-613 / Malish 7)</name>
    <dbReference type="NCBI Taxonomy" id="272944"/>
    <lineage>
        <taxon>Bacteria</taxon>
        <taxon>Pseudomonadati</taxon>
        <taxon>Pseudomonadota</taxon>
        <taxon>Alphaproteobacteria</taxon>
        <taxon>Rickettsiales</taxon>
        <taxon>Rickettsiaceae</taxon>
        <taxon>Rickettsieae</taxon>
        <taxon>Rickettsia</taxon>
        <taxon>spotted fever group</taxon>
    </lineage>
</organism>
<comment type="function">
    <text evidence="1">Involved in peptide bond synthesis. Stimulates efficient translation and peptide-bond synthesis on native or reconstituted 70S ribosomes in vitro. Probably functions indirectly by altering the affinity of the ribosome for aminoacyl-tRNA, thus increasing their reactivity as acceptors for peptidyl transferase (By similarity).</text>
</comment>
<comment type="pathway">
    <text>Protein biosynthesis; polypeptide chain elongation.</text>
</comment>
<comment type="subcellular location">
    <subcellularLocation>
        <location evidence="1">Cytoplasm</location>
    </subcellularLocation>
</comment>
<comment type="similarity">
    <text evidence="2">Belongs to the elongation factor P family.</text>
</comment>
<dbReference type="EMBL" id="AE006914">
    <property type="protein sequence ID" value="AAL02860.1"/>
    <property type="molecule type" value="Genomic_DNA"/>
</dbReference>
<dbReference type="PIR" id="B97740">
    <property type="entry name" value="B97740"/>
</dbReference>
<dbReference type="RefSeq" id="WP_010976980.1">
    <property type="nucleotide sequence ID" value="NC_003103.1"/>
</dbReference>
<dbReference type="SMR" id="Q92IU8"/>
<dbReference type="GeneID" id="927498"/>
<dbReference type="KEGG" id="rco:RC0322"/>
<dbReference type="PATRIC" id="fig|272944.4.peg.369"/>
<dbReference type="HOGENOM" id="CLU_074944_1_1_5"/>
<dbReference type="UniPathway" id="UPA00345"/>
<dbReference type="Proteomes" id="UP000000816">
    <property type="component" value="Chromosome"/>
</dbReference>
<dbReference type="GO" id="GO:0005737">
    <property type="term" value="C:cytoplasm"/>
    <property type="evidence" value="ECO:0007669"/>
    <property type="project" value="UniProtKB-SubCell"/>
</dbReference>
<dbReference type="GO" id="GO:0003746">
    <property type="term" value="F:translation elongation factor activity"/>
    <property type="evidence" value="ECO:0007669"/>
    <property type="project" value="UniProtKB-UniRule"/>
</dbReference>
<dbReference type="GO" id="GO:0043043">
    <property type="term" value="P:peptide biosynthetic process"/>
    <property type="evidence" value="ECO:0007669"/>
    <property type="project" value="InterPro"/>
</dbReference>
<dbReference type="CDD" id="cd04470">
    <property type="entry name" value="S1_EF-P_repeat_1"/>
    <property type="match status" value="1"/>
</dbReference>
<dbReference type="FunFam" id="2.40.50.140:FF:000004">
    <property type="entry name" value="Elongation factor P"/>
    <property type="match status" value="1"/>
</dbReference>
<dbReference type="FunFam" id="2.40.50.140:FF:000009">
    <property type="entry name" value="Elongation factor P"/>
    <property type="match status" value="1"/>
</dbReference>
<dbReference type="Gene3D" id="2.30.30.30">
    <property type="match status" value="1"/>
</dbReference>
<dbReference type="Gene3D" id="2.40.50.140">
    <property type="entry name" value="Nucleic acid-binding proteins"/>
    <property type="match status" value="2"/>
</dbReference>
<dbReference type="HAMAP" id="MF_00141">
    <property type="entry name" value="EF_P"/>
    <property type="match status" value="1"/>
</dbReference>
<dbReference type="InterPro" id="IPR015365">
    <property type="entry name" value="Elong-fact-P_C"/>
</dbReference>
<dbReference type="InterPro" id="IPR012340">
    <property type="entry name" value="NA-bd_OB-fold"/>
</dbReference>
<dbReference type="InterPro" id="IPR014722">
    <property type="entry name" value="Rib_uL2_dom2"/>
</dbReference>
<dbReference type="InterPro" id="IPR020599">
    <property type="entry name" value="Transl_elong_fac_P/YeiP"/>
</dbReference>
<dbReference type="InterPro" id="IPR013185">
    <property type="entry name" value="Transl_elong_KOW-like"/>
</dbReference>
<dbReference type="InterPro" id="IPR001059">
    <property type="entry name" value="Transl_elong_P/YeiP_cen"/>
</dbReference>
<dbReference type="InterPro" id="IPR013852">
    <property type="entry name" value="Transl_elong_P/YeiP_CS"/>
</dbReference>
<dbReference type="InterPro" id="IPR011768">
    <property type="entry name" value="Transl_elongation_fac_P"/>
</dbReference>
<dbReference type="InterPro" id="IPR008991">
    <property type="entry name" value="Translation_prot_SH3-like_sf"/>
</dbReference>
<dbReference type="NCBIfam" id="TIGR00038">
    <property type="entry name" value="efp"/>
    <property type="match status" value="1"/>
</dbReference>
<dbReference type="NCBIfam" id="NF001810">
    <property type="entry name" value="PRK00529.1"/>
    <property type="match status" value="1"/>
</dbReference>
<dbReference type="PANTHER" id="PTHR30053">
    <property type="entry name" value="ELONGATION FACTOR P"/>
    <property type="match status" value="1"/>
</dbReference>
<dbReference type="PANTHER" id="PTHR30053:SF14">
    <property type="entry name" value="TRANSLATION ELONGATION FACTOR KOW-LIKE DOMAIN-CONTAINING PROTEIN"/>
    <property type="match status" value="1"/>
</dbReference>
<dbReference type="Pfam" id="PF01132">
    <property type="entry name" value="EFP"/>
    <property type="match status" value="1"/>
</dbReference>
<dbReference type="Pfam" id="PF08207">
    <property type="entry name" value="EFP_N"/>
    <property type="match status" value="1"/>
</dbReference>
<dbReference type="Pfam" id="PF09285">
    <property type="entry name" value="Elong-fact-P_C"/>
    <property type="match status" value="1"/>
</dbReference>
<dbReference type="PIRSF" id="PIRSF005901">
    <property type="entry name" value="EF-P"/>
    <property type="match status" value="1"/>
</dbReference>
<dbReference type="SMART" id="SM01185">
    <property type="entry name" value="EFP"/>
    <property type="match status" value="1"/>
</dbReference>
<dbReference type="SMART" id="SM00841">
    <property type="entry name" value="Elong-fact-P_C"/>
    <property type="match status" value="1"/>
</dbReference>
<dbReference type="SUPFAM" id="SSF50249">
    <property type="entry name" value="Nucleic acid-binding proteins"/>
    <property type="match status" value="2"/>
</dbReference>
<dbReference type="SUPFAM" id="SSF50104">
    <property type="entry name" value="Translation proteins SH3-like domain"/>
    <property type="match status" value="1"/>
</dbReference>
<dbReference type="PROSITE" id="PS01275">
    <property type="entry name" value="EFP"/>
    <property type="match status" value="1"/>
</dbReference>
<keyword id="KW-0963">Cytoplasm</keyword>
<keyword id="KW-0251">Elongation factor</keyword>
<keyword id="KW-0648">Protein biosynthesis</keyword>